<gene>
    <name evidence="6" type="primary">gpb-2</name>
    <name evidence="6" type="synonym">eat-11</name>
    <name evidence="6" type="synonym">gbp-2</name>
    <name evidence="6" type="ORF">F52A8.2</name>
</gene>
<feature type="chain" id="PRO_0000127713" description="Guanine nucleotide-binding protein subunit beta-2">
    <location>
        <begin position="1"/>
        <end position="369"/>
    </location>
</feature>
<feature type="repeat" description="WD 1">
    <location>
        <begin position="79"/>
        <end position="109"/>
    </location>
</feature>
<feature type="repeat" description="WD 2">
    <location>
        <begin position="121"/>
        <end position="151"/>
    </location>
</feature>
<feature type="repeat" description="WD 3">
    <location>
        <begin position="167"/>
        <end position="197"/>
    </location>
</feature>
<feature type="repeat" description="WD 4">
    <location>
        <begin position="209"/>
        <end position="241"/>
    </location>
</feature>
<feature type="repeat" description="WD 5">
    <location>
        <begin position="253"/>
        <end position="283"/>
    </location>
</feature>
<feature type="repeat" description="WD 6">
    <location>
        <begin position="297"/>
        <end position="327"/>
    </location>
</feature>
<feature type="repeat" description="WD 7">
    <location>
        <begin position="339"/>
        <end position="369"/>
    </location>
</feature>
<feature type="region of interest" description="Disordered" evidence="2">
    <location>
        <begin position="1"/>
        <end position="28"/>
    </location>
</feature>
<feature type="compositionally biased region" description="Polar residues" evidence="2">
    <location>
        <begin position="1"/>
        <end position="24"/>
    </location>
</feature>
<feature type="mutagenesis site" description="Defective dopamine signaling." evidence="4">
    <original>A</original>
    <variation>T</variation>
    <location>
        <position position="130"/>
    </location>
</feature>
<dbReference type="EMBL" id="AF291847">
    <property type="protein sequence ID" value="AAK55964.1"/>
    <property type="molecule type" value="mRNA"/>
</dbReference>
<dbReference type="EMBL" id="BX284601">
    <property type="protein sequence ID" value="CAA95824.2"/>
    <property type="molecule type" value="Genomic_DNA"/>
</dbReference>
<dbReference type="PIR" id="T22478">
    <property type="entry name" value="T22478"/>
</dbReference>
<dbReference type="RefSeq" id="NP_492072.2">
    <property type="nucleotide sequence ID" value="NM_059671.10"/>
</dbReference>
<dbReference type="SMR" id="Q20636"/>
<dbReference type="BioGRID" id="37925">
    <property type="interactions" value="12"/>
</dbReference>
<dbReference type="FunCoup" id="Q20636">
    <property type="interactions" value="1279"/>
</dbReference>
<dbReference type="STRING" id="6239.F52A8.2a.1"/>
<dbReference type="PaxDb" id="6239-F52A8.2"/>
<dbReference type="PeptideAtlas" id="Q20636"/>
<dbReference type="EnsemblMetazoa" id="F52A8.2a.1">
    <property type="protein sequence ID" value="F52A8.2a.1"/>
    <property type="gene ID" value="WBGene00001680"/>
</dbReference>
<dbReference type="GeneID" id="172483"/>
<dbReference type="KEGG" id="cel:CELE_F52A8.2"/>
<dbReference type="UCSC" id="F52A8.2">
    <property type="organism name" value="c. elegans"/>
</dbReference>
<dbReference type="AGR" id="WB:WBGene00001680"/>
<dbReference type="CTD" id="172483"/>
<dbReference type="WormBase" id="F52A8.2a">
    <property type="protein sequence ID" value="CE50400"/>
    <property type="gene ID" value="WBGene00001680"/>
    <property type="gene designation" value="gpb-2"/>
</dbReference>
<dbReference type="eggNOG" id="KOG0286">
    <property type="taxonomic scope" value="Eukaryota"/>
</dbReference>
<dbReference type="GeneTree" id="ENSGT01000000214413"/>
<dbReference type="HOGENOM" id="CLU_000288_57_34_1"/>
<dbReference type="InParanoid" id="Q20636"/>
<dbReference type="OMA" id="LDNKCTI"/>
<dbReference type="OrthoDB" id="10255630at2759"/>
<dbReference type="PhylomeDB" id="Q20636"/>
<dbReference type="Reactome" id="R-CEL-1296041">
    <property type="pathway name" value="Activation of G protein gated Potassium channels"/>
</dbReference>
<dbReference type="Reactome" id="R-CEL-202040">
    <property type="pathway name" value="G-protein activation"/>
</dbReference>
<dbReference type="Reactome" id="R-CEL-392170">
    <property type="pathway name" value="ADP signalling through P2Y purinoceptor 12"/>
</dbReference>
<dbReference type="Reactome" id="R-CEL-400042">
    <property type="pathway name" value="Adrenaline,noradrenaline inhibits insulin secretion"/>
</dbReference>
<dbReference type="Reactome" id="R-CEL-4086398">
    <property type="pathway name" value="Ca2+ pathway"/>
</dbReference>
<dbReference type="Reactome" id="R-CEL-416476">
    <property type="pathway name" value="G alpha (q) signalling events"/>
</dbReference>
<dbReference type="Reactome" id="R-CEL-416482">
    <property type="pathway name" value="G alpha (12/13) signalling events"/>
</dbReference>
<dbReference type="Reactome" id="R-CEL-418555">
    <property type="pathway name" value="G alpha (s) signalling events"/>
</dbReference>
<dbReference type="Reactome" id="R-CEL-418594">
    <property type="pathway name" value="G alpha (i) signalling events"/>
</dbReference>
<dbReference type="Reactome" id="R-CEL-418597">
    <property type="pathway name" value="G alpha (z) signalling events"/>
</dbReference>
<dbReference type="Reactome" id="R-CEL-428930">
    <property type="pathway name" value="Thromboxane signalling through TP receptor"/>
</dbReference>
<dbReference type="Reactome" id="R-CEL-456926">
    <property type="pathway name" value="Thrombin signalling through proteinase activated receptors (PARs)"/>
</dbReference>
<dbReference type="Reactome" id="R-CEL-6814122">
    <property type="pathway name" value="Cooperation of PDCL (PhLP1) and TRiC/CCT in G-protein beta folding"/>
</dbReference>
<dbReference type="Reactome" id="R-CEL-8964616">
    <property type="pathway name" value="G beta:gamma signalling through CDC42"/>
</dbReference>
<dbReference type="Reactome" id="R-CEL-997272">
    <property type="pathway name" value="Inhibition of voltage gated Ca2+ channels via Gbeta/gamma subunits"/>
</dbReference>
<dbReference type="PRO" id="PR:Q20636"/>
<dbReference type="Proteomes" id="UP000001940">
    <property type="component" value="Chromosome I"/>
</dbReference>
<dbReference type="GO" id="GO:0005737">
    <property type="term" value="C:cytoplasm"/>
    <property type="evidence" value="ECO:0000318"/>
    <property type="project" value="GO_Central"/>
</dbReference>
<dbReference type="GO" id="GO:0005834">
    <property type="term" value="C:heterotrimeric G-protein complex"/>
    <property type="evidence" value="ECO:0000318"/>
    <property type="project" value="GO_Central"/>
</dbReference>
<dbReference type="GO" id="GO:0043025">
    <property type="term" value="C:neuronal cell body"/>
    <property type="evidence" value="ECO:0000314"/>
    <property type="project" value="WormBase"/>
</dbReference>
<dbReference type="GO" id="GO:0045202">
    <property type="term" value="C:synapse"/>
    <property type="evidence" value="ECO:0007669"/>
    <property type="project" value="GOC"/>
</dbReference>
<dbReference type="GO" id="GO:0030159">
    <property type="term" value="F:signaling receptor complex adaptor activity"/>
    <property type="evidence" value="ECO:0000318"/>
    <property type="project" value="GO_Central"/>
</dbReference>
<dbReference type="GO" id="GO:0007631">
    <property type="term" value="P:feeding behavior"/>
    <property type="evidence" value="ECO:0000315"/>
    <property type="project" value="WormBase"/>
</dbReference>
<dbReference type="GO" id="GO:0007213">
    <property type="term" value="P:G protein-coupled acetylcholine receptor signaling pathway"/>
    <property type="evidence" value="ECO:0000315"/>
    <property type="project" value="WormBase"/>
</dbReference>
<dbReference type="GO" id="GO:0007212">
    <property type="term" value="P:G protein-coupled dopamine receptor signaling pathway"/>
    <property type="evidence" value="ECO:0000315"/>
    <property type="project" value="WormBase"/>
</dbReference>
<dbReference type="GO" id="GO:0010629">
    <property type="term" value="P:negative regulation of gene expression"/>
    <property type="evidence" value="ECO:0000315"/>
    <property type="project" value="UniProtKB"/>
</dbReference>
<dbReference type="GO" id="GO:0046662">
    <property type="term" value="P:regulation of egg-laying behavior"/>
    <property type="evidence" value="ECO:0000315"/>
    <property type="project" value="WormBase"/>
</dbReference>
<dbReference type="GO" id="GO:0008277">
    <property type="term" value="P:regulation of G protein-coupled receptor signaling pathway"/>
    <property type="evidence" value="ECO:0000316"/>
    <property type="project" value="WormBase"/>
</dbReference>
<dbReference type="GO" id="GO:0040012">
    <property type="term" value="P:regulation of locomotion"/>
    <property type="evidence" value="ECO:0000315"/>
    <property type="project" value="WormBase"/>
</dbReference>
<dbReference type="GO" id="GO:0043051">
    <property type="term" value="P:regulation of nematode pharyngeal pumping"/>
    <property type="evidence" value="ECO:0000315"/>
    <property type="project" value="WormBase"/>
</dbReference>
<dbReference type="GO" id="GO:0032094">
    <property type="term" value="P:response to food"/>
    <property type="evidence" value="ECO:0000315"/>
    <property type="project" value="WormBase"/>
</dbReference>
<dbReference type="CDD" id="cd00200">
    <property type="entry name" value="WD40"/>
    <property type="match status" value="1"/>
</dbReference>
<dbReference type="FunFam" id="2.130.10.10:FF:000020">
    <property type="entry name" value="Guanine nucleotide-binding protein beta subunit"/>
    <property type="match status" value="1"/>
</dbReference>
<dbReference type="Gene3D" id="2.130.10.10">
    <property type="entry name" value="YVTN repeat-like/Quinoprotein amine dehydrogenase"/>
    <property type="match status" value="1"/>
</dbReference>
<dbReference type="InterPro" id="IPR020472">
    <property type="entry name" value="G-protein_beta_WD-40_rep"/>
</dbReference>
<dbReference type="InterPro" id="IPR001632">
    <property type="entry name" value="Gprotein_B"/>
</dbReference>
<dbReference type="InterPro" id="IPR016346">
    <property type="entry name" value="Guanine_nucleotide-bd_bsu"/>
</dbReference>
<dbReference type="InterPro" id="IPR015943">
    <property type="entry name" value="WD40/YVTN_repeat-like_dom_sf"/>
</dbReference>
<dbReference type="InterPro" id="IPR019775">
    <property type="entry name" value="WD40_repeat_CS"/>
</dbReference>
<dbReference type="InterPro" id="IPR036322">
    <property type="entry name" value="WD40_repeat_dom_sf"/>
</dbReference>
<dbReference type="InterPro" id="IPR001680">
    <property type="entry name" value="WD40_rpt"/>
</dbReference>
<dbReference type="PANTHER" id="PTHR19850">
    <property type="entry name" value="GUANINE NUCLEOTIDE-BINDING PROTEIN BETA G PROTEIN BETA"/>
    <property type="match status" value="1"/>
</dbReference>
<dbReference type="Pfam" id="PF25391">
    <property type="entry name" value="WD40_Gbeta"/>
    <property type="match status" value="1"/>
</dbReference>
<dbReference type="PIRSF" id="PIRSF002394">
    <property type="entry name" value="GN-bd_beta"/>
    <property type="match status" value="1"/>
</dbReference>
<dbReference type="PRINTS" id="PR00319">
    <property type="entry name" value="GPROTEINB"/>
</dbReference>
<dbReference type="PRINTS" id="PR00320">
    <property type="entry name" value="GPROTEINBRPT"/>
</dbReference>
<dbReference type="SMART" id="SM00320">
    <property type="entry name" value="WD40"/>
    <property type="match status" value="7"/>
</dbReference>
<dbReference type="SUPFAM" id="SSF50978">
    <property type="entry name" value="WD40 repeat-like"/>
    <property type="match status" value="1"/>
</dbReference>
<dbReference type="PROSITE" id="PS00678">
    <property type="entry name" value="WD_REPEATS_1"/>
    <property type="match status" value="3"/>
</dbReference>
<dbReference type="PROSITE" id="PS50082">
    <property type="entry name" value="WD_REPEATS_2"/>
    <property type="match status" value="5"/>
</dbReference>
<dbReference type="PROSITE" id="PS50294">
    <property type="entry name" value="WD_REPEATS_REGION"/>
    <property type="match status" value="1"/>
</dbReference>
<comment type="function">
    <text evidence="4">Guanine nucleotide-binding proteins (G proteins) are involved as a modulator or transducer in various transmembrane signaling systems. The beta and gamma chains are required for the GTPase activity, for replacement of GDP by GTP, and for G protein-effector interaction. Plays a role in regulating dopamine-mediated locomotion behavior (PubMed:15378064).</text>
</comment>
<comment type="subunit">
    <text evidence="1 3">G proteins are composed of 3 units, alpha, beta and gamma (By similarity). Interacts with G protein gamma subunits gpc-1 and gpc-2 and with egl-10 and eat-16 (PubMed:11333232).</text>
</comment>
<comment type="similarity">
    <text evidence="5">Belongs to the WD repeat G protein beta family.</text>
</comment>
<proteinExistence type="evidence at protein level"/>
<reference key="1">
    <citation type="journal article" date="1998" name="Science">
        <title>Genome sequence of the nematode C. elegans: a platform for investigating biology.</title>
        <authorList>
            <consortium name="The C. elegans sequencing consortium"/>
        </authorList>
    </citation>
    <scope>NUCLEOTIDE SEQUENCE [LARGE SCALE GENOMIC DNA]</scope>
    <source>
        <strain>Bristol N2</strain>
    </source>
</reference>
<reference key="2">
    <citation type="journal article" date="2001" name="Genetics">
        <title>The G protein beta subunit gpb-2 in Caenorhabditis elegans regulates the G(o)alpha-G(q)alpha signaling network through interactions with the regulator of G protein signaling proteins egl-10 and eat-16.</title>
        <authorList>
            <person name="van Der Linden A.M."/>
            <person name="Simmer F."/>
            <person name="Cuppen E."/>
            <person name="Plasterk R.H.A."/>
        </authorList>
    </citation>
    <scope>NUCLEOTIDE SEQUENCE [MRNA] OF 14-369</scope>
    <scope>INTERACTION WITH GPC-1; GPC-2; EAT-10 AND EAT-16</scope>
    <source>
        <strain>Bristol N2</strain>
    </source>
</reference>
<reference key="3">
    <citation type="journal article" date="2004" name="Nat. Neurosci.">
        <title>Mechanism of extrasynaptic dopamine signaling in Caenorhabditis elegans.</title>
        <authorList>
            <person name="Chase D.L."/>
            <person name="Pepper J.S."/>
            <person name="Koelle M.R."/>
        </authorList>
    </citation>
    <scope>FUNCTION</scope>
    <scope>MUTAGENESIS OF ALA-130</scope>
</reference>
<sequence>MSTIAGESSSSSKMPENSQPTTTEKGSEYLEQLANEAEELRKKLDQERHKLNDIPIQQAAERLDVMGALGVKQRRILKGHVGKVLCMDWSLDKRHIVSSSQDGKVIVWDGFTTNKEHALTMPTTWVMACAFSPSSQMIACGGLDNKCSVVPLSFEDDIIQKKRQVATHTSYMSCCTFLRSDNLILTGSGDSTCAIWDVESGQLIQNFHGHTGDVFAIDVPKCDTGNTFISAGADKHSLVWDIRSGQCVQSFEGHEADINTVRFHPNGDAFATGSDDATCRLFDLRADRQVCVYEKESILFPVNGVDFSLSGRILFAGYGDYRVGVWDSLKCARHSVLYGHENRISCLRTSPDGTAVCSASWDCTIRIWA</sequence>
<accession>Q20636</accession>
<protein>
    <recommendedName>
        <fullName>Guanine nucleotide-binding protein subunit beta-2</fullName>
    </recommendedName>
</protein>
<evidence type="ECO:0000250" key="1">
    <source>
        <dbReference type="UniProtKB" id="P63212"/>
    </source>
</evidence>
<evidence type="ECO:0000256" key="2">
    <source>
        <dbReference type="SAM" id="MobiDB-lite"/>
    </source>
</evidence>
<evidence type="ECO:0000269" key="3">
    <source>
    </source>
</evidence>
<evidence type="ECO:0000269" key="4">
    <source>
    </source>
</evidence>
<evidence type="ECO:0000305" key="5"/>
<evidence type="ECO:0000312" key="6">
    <source>
        <dbReference type="WormBase" id="F52A8.2a"/>
    </source>
</evidence>
<keyword id="KW-1185">Reference proteome</keyword>
<keyword id="KW-0677">Repeat</keyword>
<keyword id="KW-0807">Transducer</keyword>
<keyword id="KW-0853">WD repeat</keyword>
<organism>
    <name type="scientific">Caenorhabditis elegans</name>
    <dbReference type="NCBI Taxonomy" id="6239"/>
    <lineage>
        <taxon>Eukaryota</taxon>
        <taxon>Metazoa</taxon>
        <taxon>Ecdysozoa</taxon>
        <taxon>Nematoda</taxon>
        <taxon>Chromadorea</taxon>
        <taxon>Rhabditida</taxon>
        <taxon>Rhabditina</taxon>
        <taxon>Rhabditomorpha</taxon>
        <taxon>Rhabditoidea</taxon>
        <taxon>Rhabditidae</taxon>
        <taxon>Peloderinae</taxon>
        <taxon>Caenorhabditis</taxon>
    </lineage>
</organism>
<name>GBB2_CAEEL</name>